<dbReference type="EMBL" id="CP001399">
    <property type="protein sequence ID" value="ACP35988.1"/>
    <property type="molecule type" value="Genomic_DNA"/>
</dbReference>
<dbReference type="RefSeq" id="WP_012714017.1">
    <property type="nucleotide sequence ID" value="NC_012589.1"/>
</dbReference>
<dbReference type="SMR" id="C3MRH5"/>
<dbReference type="GeneID" id="7807611"/>
<dbReference type="KEGG" id="sis:LS215_1993"/>
<dbReference type="HOGENOM" id="CLU_095956_1_1_2"/>
<dbReference type="OrthoDB" id="15207at2157"/>
<dbReference type="Proteomes" id="UP000001747">
    <property type="component" value="Chromosome"/>
</dbReference>
<dbReference type="Gene3D" id="3.30.2170.10">
    <property type="entry name" value="archaeoglobus fulgidus dsm 4304 superfamily"/>
    <property type="match status" value="1"/>
</dbReference>
<dbReference type="HAMAP" id="MF_00582">
    <property type="entry name" value="UPF0215"/>
    <property type="match status" value="1"/>
</dbReference>
<dbReference type="InterPro" id="IPR002802">
    <property type="entry name" value="Endo_dU"/>
</dbReference>
<dbReference type="PANTHER" id="PTHR39518">
    <property type="entry name" value="UPF0215 PROTEIN MJ1150"/>
    <property type="match status" value="1"/>
</dbReference>
<dbReference type="PANTHER" id="PTHR39518:SF2">
    <property type="entry name" value="UPF0215 PROTEIN MJ1150"/>
    <property type="match status" value="1"/>
</dbReference>
<dbReference type="Pfam" id="PF01949">
    <property type="entry name" value="DUF99"/>
    <property type="match status" value="1"/>
</dbReference>
<dbReference type="PIRSF" id="PIRSF006380">
    <property type="entry name" value="UCP006380"/>
    <property type="match status" value="1"/>
</dbReference>
<reference key="1">
    <citation type="journal article" date="2009" name="Proc. Natl. Acad. Sci. U.S.A.">
        <title>Biogeography of the Sulfolobus islandicus pan-genome.</title>
        <authorList>
            <person name="Reno M.L."/>
            <person name="Held N.L."/>
            <person name="Fields C.J."/>
            <person name="Burke P.V."/>
            <person name="Whitaker R.J."/>
        </authorList>
    </citation>
    <scope>NUCLEOTIDE SEQUENCE [LARGE SCALE GENOMIC DNA]</scope>
    <source>
        <strain>L.S.2.15 / Lassen #1</strain>
    </source>
</reference>
<feature type="chain" id="PRO_1000212135" description="UPF0215 protein LS215_1993">
    <location>
        <begin position="1"/>
        <end position="179"/>
    </location>
</feature>
<sequence length="179" mass="20322">MPISGVDDGYFPLSYKGGKGKTALVVVTFYDYEMIDLDWGLITVDGNDATDVLKQLRKGDIVILDGVIFAGFNYIVPYSDNMIFFYSKMPKVDLIKNALMKHFQADTERVREILYVLNNLKQIPTKRGNVFLYSTVELSLAKSIIEKYQIYSKIPEVLKSAHVIASSLGRFLARYKKTV</sequence>
<name>Y1993_SACI2</name>
<organism>
    <name type="scientific">Saccharolobus islandicus (strain L.S.2.15 / Lassen #1)</name>
    <name type="common">Sulfolobus islandicus</name>
    <dbReference type="NCBI Taxonomy" id="429572"/>
    <lineage>
        <taxon>Archaea</taxon>
        <taxon>Thermoproteota</taxon>
        <taxon>Thermoprotei</taxon>
        <taxon>Sulfolobales</taxon>
        <taxon>Sulfolobaceae</taxon>
        <taxon>Saccharolobus</taxon>
    </lineage>
</organism>
<protein>
    <recommendedName>
        <fullName evidence="1">UPF0215 protein LS215_1993</fullName>
    </recommendedName>
</protein>
<evidence type="ECO:0000255" key="1">
    <source>
        <dbReference type="HAMAP-Rule" id="MF_00582"/>
    </source>
</evidence>
<gene>
    <name type="ordered locus">LS215_1993</name>
</gene>
<proteinExistence type="inferred from homology"/>
<comment type="similarity">
    <text evidence="1">Belongs to the UPF0215 family.</text>
</comment>
<accession>C3MRH5</accession>